<protein>
    <recommendedName>
        <fullName evidence="1">Large ribosomal subunit protein uL5</fullName>
    </recommendedName>
    <alternativeName>
        <fullName evidence="2">50S ribosomal protein L5</fullName>
    </alternativeName>
</protein>
<reference key="1">
    <citation type="submission" date="2007-02" db="EMBL/GenBank/DDBJ databases">
        <title>Complete sequence of chromosome of Yersinia pestis Pestoides F.</title>
        <authorList>
            <consortium name="US DOE Joint Genome Institute"/>
            <person name="Copeland A."/>
            <person name="Lucas S."/>
            <person name="Lapidus A."/>
            <person name="Barry K."/>
            <person name="Detter J.C."/>
            <person name="Glavina del Rio T."/>
            <person name="Hammon N."/>
            <person name="Israni S."/>
            <person name="Dalin E."/>
            <person name="Tice H."/>
            <person name="Pitluck S."/>
            <person name="Di Bartolo G."/>
            <person name="Chain P."/>
            <person name="Malfatti S."/>
            <person name="Shin M."/>
            <person name="Vergez L."/>
            <person name="Schmutz J."/>
            <person name="Larimer F."/>
            <person name="Land M."/>
            <person name="Hauser L."/>
            <person name="Worsham P."/>
            <person name="Chu M."/>
            <person name="Bearden S."/>
            <person name="Garcia E."/>
            <person name="Richardson P."/>
        </authorList>
    </citation>
    <scope>NUCLEOTIDE SEQUENCE [LARGE SCALE GENOMIC DNA]</scope>
    <source>
        <strain>Pestoides F</strain>
    </source>
</reference>
<gene>
    <name evidence="1" type="primary">rplE</name>
    <name type="ordered locus">YPDSF_0145</name>
</gene>
<accession>A4TH04</accession>
<dbReference type="EMBL" id="CP000668">
    <property type="protein sequence ID" value="ABP38567.1"/>
    <property type="molecule type" value="Genomic_DNA"/>
</dbReference>
<dbReference type="RefSeq" id="WP_002213329.1">
    <property type="nucleotide sequence ID" value="NZ_CP009715.1"/>
</dbReference>
<dbReference type="SMR" id="A4TH04"/>
<dbReference type="GeneID" id="96663184"/>
<dbReference type="KEGG" id="ypp:YPDSF_0145"/>
<dbReference type="PATRIC" id="fig|386656.14.peg.422"/>
<dbReference type="GO" id="GO:1990904">
    <property type="term" value="C:ribonucleoprotein complex"/>
    <property type="evidence" value="ECO:0007669"/>
    <property type="project" value="UniProtKB-KW"/>
</dbReference>
<dbReference type="GO" id="GO:0005840">
    <property type="term" value="C:ribosome"/>
    <property type="evidence" value="ECO:0007669"/>
    <property type="project" value="UniProtKB-KW"/>
</dbReference>
<dbReference type="GO" id="GO:0019843">
    <property type="term" value="F:rRNA binding"/>
    <property type="evidence" value="ECO:0007669"/>
    <property type="project" value="UniProtKB-UniRule"/>
</dbReference>
<dbReference type="GO" id="GO:0003735">
    <property type="term" value="F:structural constituent of ribosome"/>
    <property type="evidence" value="ECO:0007669"/>
    <property type="project" value="InterPro"/>
</dbReference>
<dbReference type="GO" id="GO:0000049">
    <property type="term" value="F:tRNA binding"/>
    <property type="evidence" value="ECO:0007669"/>
    <property type="project" value="UniProtKB-UniRule"/>
</dbReference>
<dbReference type="GO" id="GO:0006412">
    <property type="term" value="P:translation"/>
    <property type="evidence" value="ECO:0007669"/>
    <property type="project" value="UniProtKB-UniRule"/>
</dbReference>
<dbReference type="FunFam" id="3.30.1440.10:FF:000001">
    <property type="entry name" value="50S ribosomal protein L5"/>
    <property type="match status" value="1"/>
</dbReference>
<dbReference type="Gene3D" id="3.30.1440.10">
    <property type="match status" value="1"/>
</dbReference>
<dbReference type="HAMAP" id="MF_01333_B">
    <property type="entry name" value="Ribosomal_uL5_B"/>
    <property type="match status" value="1"/>
</dbReference>
<dbReference type="InterPro" id="IPR002132">
    <property type="entry name" value="Ribosomal_uL5"/>
</dbReference>
<dbReference type="InterPro" id="IPR020930">
    <property type="entry name" value="Ribosomal_uL5_bac-type"/>
</dbReference>
<dbReference type="InterPro" id="IPR031309">
    <property type="entry name" value="Ribosomal_uL5_C"/>
</dbReference>
<dbReference type="InterPro" id="IPR022803">
    <property type="entry name" value="Ribosomal_uL5_dom_sf"/>
</dbReference>
<dbReference type="InterPro" id="IPR031310">
    <property type="entry name" value="Ribosomal_uL5_N"/>
</dbReference>
<dbReference type="NCBIfam" id="NF000585">
    <property type="entry name" value="PRK00010.1"/>
    <property type="match status" value="1"/>
</dbReference>
<dbReference type="PANTHER" id="PTHR11994">
    <property type="entry name" value="60S RIBOSOMAL PROTEIN L11-RELATED"/>
    <property type="match status" value="1"/>
</dbReference>
<dbReference type="Pfam" id="PF00281">
    <property type="entry name" value="Ribosomal_L5"/>
    <property type="match status" value="1"/>
</dbReference>
<dbReference type="Pfam" id="PF00673">
    <property type="entry name" value="Ribosomal_L5_C"/>
    <property type="match status" value="1"/>
</dbReference>
<dbReference type="PIRSF" id="PIRSF002161">
    <property type="entry name" value="Ribosomal_L5"/>
    <property type="match status" value="1"/>
</dbReference>
<dbReference type="SUPFAM" id="SSF55282">
    <property type="entry name" value="RL5-like"/>
    <property type="match status" value="1"/>
</dbReference>
<feature type="chain" id="PRO_1000052859" description="Large ribosomal subunit protein uL5">
    <location>
        <begin position="1"/>
        <end position="179"/>
    </location>
</feature>
<comment type="function">
    <text evidence="1">This is one of the proteins that bind and probably mediate the attachment of the 5S RNA into the large ribosomal subunit, where it forms part of the central protuberance. In the 70S ribosome it contacts protein S13 of the 30S subunit (bridge B1b), connecting the 2 subunits; this bridge is implicated in subunit movement. Contacts the P site tRNA; the 5S rRNA and some of its associated proteins might help stabilize positioning of ribosome-bound tRNAs.</text>
</comment>
<comment type="subunit">
    <text evidence="1">Part of the 50S ribosomal subunit; part of the 5S rRNA/L5/L18/L25 subcomplex. Contacts the 5S rRNA and the P site tRNA. Forms a bridge to the 30S subunit in the 70S ribosome.</text>
</comment>
<comment type="similarity">
    <text evidence="1">Belongs to the universal ribosomal protein uL5 family.</text>
</comment>
<sequence>MAKLHDYYKDEVVKQLMSQFGYDSVMQVPRVEKITLNMGVGEAIADKKLLDNAAADLAAISGQKPFITKARKSVAGFKIRQGYPIGCKVTLRGERMWEFFERLITIAVPRIRDFRGLSAKSFDGRGNYSMGVREQIIFPEIDYDKVDRVRGLDITITTTAKSDDEGRALLAAFKFPFRK</sequence>
<keyword id="KW-0687">Ribonucleoprotein</keyword>
<keyword id="KW-0689">Ribosomal protein</keyword>
<keyword id="KW-0694">RNA-binding</keyword>
<keyword id="KW-0699">rRNA-binding</keyword>
<keyword id="KW-0820">tRNA-binding</keyword>
<organism>
    <name type="scientific">Yersinia pestis (strain Pestoides F)</name>
    <dbReference type="NCBI Taxonomy" id="386656"/>
    <lineage>
        <taxon>Bacteria</taxon>
        <taxon>Pseudomonadati</taxon>
        <taxon>Pseudomonadota</taxon>
        <taxon>Gammaproteobacteria</taxon>
        <taxon>Enterobacterales</taxon>
        <taxon>Yersiniaceae</taxon>
        <taxon>Yersinia</taxon>
    </lineage>
</organism>
<proteinExistence type="inferred from homology"/>
<evidence type="ECO:0000255" key="1">
    <source>
        <dbReference type="HAMAP-Rule" id="MF_01333"/>
    </source>
</evidence>
<evidence type="ECO:0000305" key="2"/>
<name>RL5_YERPP</name>